<keyword id="KW-0002">3D-structure</keyword>
<keyword id="KW-0285">Flavoprotein</keyword>
<keyword id="KW-0288">FMN</keyword>
<reference key="1">
    <citation type="journal article" date="1998" name="DNA Res.">
        <title>Complete sequence and gene organization of the genome of a hyper-thermophilic archaebacterium, Pyrococcus horikoshii OT3.</title>
        <authorList>
            <person name="Kawarabayasi Y."/>
            <person name="Sawada M."/>
            <person name="Horikawa H."/>
            <person name="Haikawa Y."/>
            <person name="Hino Y."/>
            <person name="Yamamoto S."/>
            <person name="Sekine M."/>
            <person name="Baba S."/>
            <person name="Kosugi H."/>
            <person name="Hosoyama A."/>
            <person name="Nagai Y."/>
            <person name="Sakai M."/>
            <person name="Ogura K."/>
            <person name="Otsuka R."/>
            <person name="Nakazawa H."/>
            <person name="Takamiya M."/>
            <person name="Ohfuku Y."/>
            <person name="Funahashi T."/>
            <person name="Tanaka T."/>
            <person name="Kudoh Y."/>
            <person name="Yamazaki J."/>
            <person name="Kushida N."/>
            <person name="Oguchi A."/>
            <person name="Aoki K."/>
            <person name="Yoshizawa T."/>
            <person name="Nakamura Y."/>
            <person name="Robb F.T."/>
            <person name="Horikoshi K."/>
            <person name="Masuchi Y."/>
            <person name="Shizuya H."/>
            <person name="Kikuchi H."/>
        </authorList>
    </citation>
    <scope>NUCLEOTIDE SEQUENCE [LARGE SCALE GENOMIC DNA]</scope>
    <source>
        <strain>ATCC 700860 / DSM 12428 / JCM 9974 / NBRC 100139 / OT-3</strain>
    </source>
</reference>
<organism>
    <name type="scientific">Pyrococcus horikoshii (strain ATCC 700860 / DSM 12428 / JCM 9974 / NBRC 100139 / OT-3)</name>
    <dbReference type="NCBI Taxonomy" id="70601"/>
    <lineage>
        <taxon>Archaea</taxon>
        <taxon>Methanobacteriati</taxon>
        <taxon>Methanobacteriota</taxon>
        <taxon>Thermococci</taxon>
        <taxon>Thermococcales</taxon>
        <taxon>Thermococcaceae</taxon>
        <taxon>Pyrococcus</taxon>
    </lineage>
</organism>
<protein>
    <recommendedName>
        <fullName>Uncharacterized protein PH0856</fullName>
    </recommendedName>
</protein>
<sequence>MEGYRLLYPMRTYLIVSGHGEETNVMAADWVTVVSFDPFIVGVAVAPKRTTHKLIKKYGEFVISVPSLDVLRDVWIAGTKKGPSKLKEMSVTLIPSKKVKVPSIEEALANIECRVIDARSYGDHTFFVGEVVGYTYKDYAFEKGKPNLKAKFLAHVSWSEFVTFSEKVHKAE</sequence>
<proteinExistence type="evidence at protein level"/>
<feature type="chain" id="PRO_0000085531" description="Uncharacterized protein PH0856">
    <location>
        <begin position="1"/>
        <end position="172"/>
    </location>
</feature>
<feature type="helix" evidence="3">
    <location>
        <begin position="3"/>
        <end position="7"/>
    </location>
</feature>
<feature type="strand" evidence="3">
    <location>
        <begin position="9"/>
        <end position="11"/>
    </location>
</feature>
<feature type="strand" evidence="3">
    <location>
        <begin position="13"/>
        <end position="17"/>
    </location>
</feature>
<feature type="helix" evidence="3">
    <location>
        <begin position="20"/>
        <end position="22"/>
    </location>
</feature>
<feature type="strand" evidence="3">
    <location>
        <begin position="24"/>
        <end position="28"/>
    </location>
</feature>
<feature type="strand" evidence="3">
    <location>
        <begin position="31"/>
        <end position="35"/>
    </location>
</feature>
<feature type="turn" evidence="3">
    <location>
        <begin position="36"/>
        <end position="39"/>
    </location>
</feature>
<feature type="strand" evidence="3">
    <location>
        <begin position="40"/>
        <end position="45"/>
    </location>
</feature>
<feature type="helix" evidence="3">
    <location>
        <begin position="50"/>
        <end position="58"/>
    </location>
</feature>
<feature type="strand" evidence="3">
    <location>
        <begin position="59"/>
        <end position="65"/>
    </location>
</feature>
<feature type="helix" evidence="3">
    <location>
        <begin position="68"/>
        <end position="70"/>
    </location>
</feature>
<feature type="helix" evidence="3">
    <location>
        <begin position="71"/>
        <end position="77"/>
    </location>
</feature>
<feature type="helix" evidence="3">
    <location>
        <begin position="83"/>
        <end position="88"/>
    </location>
</feature>
<feature type="strand" evidence="3">
    <location>
        <begin position="97"/>
        <end position="101"/>
    </location>
</feature>
<feature type="strand" evidence="3">
    <location>
        <begin position="107"/>
        <end position="121"/>
    </location>
</feature>
<feature type="strand" evidence="3">
    <location>
        <begin position="124"/>
        <end position="136"/>
    </location>
</feature>
<feature type="helix" evidence="3">
    <location>
        <begin position="138"/>
        <end position="141"/>
    </location>
</feature>
<feature type="helix" evidence="3">
    <location>
        <begin position="148"/>
        <end position="150"/>
    </location>
</feature>
<feature type="strand" evidence="3">
    <location>
        <begin position="154"/>
        <end position="157"/>
    </location>
</feature>
<feature type="strand" evidence="3">
    <location>
        <begin position="160"/>
        <end position="162"/>
    </location>
</feature>
<name>Y856_PYRHO</name>
<accession>O58586</accession>
<gene>
    <name type="ordered locus">PH0856</name>
</gene>
<comment type="cofactor">
    <cofactor evidence="1">
        <name>FMN</name>
        <dbReference type="ChEBI" id="CHEBI:58210"/>
    </cofactor>
</comment>
<comment type="similarity">
    <text evidence="2">Belongs to the flavoredoxin family.</text>
</comment>
<dbReference type="EMBL" id="BA000001">
    <property type="protein sequence ID" value="BAA29950.1"/>
    <property type="molecule type" value="Genomic_DNA"/>
</dbReference>
<dbReference type="PIR" id="D71136">
    <property type="entry name" value="D71136"/>
</dbReference>
<dbReference type="RefSeq" id="WP_010884948.1">
    <property type="nucleotide sequence ID" value="NC_000961.1"/>
</dbReference>
<dbReference type="PDB" id="2R6V">
    <property type="method" value="X-ray"/>
    <property type="resolution" value="1.25 A"/>
    <property type="chains" value="A=1-172"/>
</dbReference>
<dbReference type="PDB" id="3ZOC">
    <property type="method" value="X-ray"/>
    <property type="resolution" value="2.10 A"/>
    <property type="chains" value="A=1-172"/>
</dbReference>
<dbReference type="PDB" id="3ZOD">
    <property type="method" value="X-ray"/>
    <property type="resolution" value="1.68 A"/>
    <property type="chains" value="A=1-172"/>
</dbReference>
<dbReference type="PDB" id="3ZOG">
    <property type="method" value="X-ray"/>
    <property type="resolution" value="1.75 A"/>
    <property type="chains" value="A=1-172"/>
</dbReference>
<dbReference type="PDBsum" id="2R6V"/>
<dbReference type="PDBsum" id="3ZOC"/>
<dbReference type="PDBsum" id="3ZOD"/>
<dbReference type="PDBsum" id="3ZOG"/>
<dbReference type="SMR" id="O58586"/>
<dbReference type="STRING" id="70601.gene:9377807"/>
<dbReference type="DNASU" id="1443183"/>
<dbReference type="EnsemblBacteria" id="BAA29950">
    <property type="protein sequence ID" value="BAA29950"/>
    <property type="gene ID" value="BAA29950"/>
</dbReference>
<dbReference type="GeneID" id="1443183"/>
<dbReference type="KEGG" id="pho:PH0856"/>
<dbReference type="eggNOG" id="arCOG02017">
    <property type="taxonomic scope" value="Archaea"/>
</dbReference>
<dbReference type="OrthoDB" id="8522at2157"/>
<dbReference type="EvolutionaryTrace" id="O58586"/>
<dbReference type="Proteomes" id="UP000000752">
    <property type="component" value="Chromosome"/>
</dbReference>
<dbReference type="GO" id="GO:0010181">
    <property type="term" value="F:FMN binding"/>
    <property type="evidence" value="ECO:0007669"/>
    <property type="project" value="InterPro"/>
</dbReference>
<dbReference type="Gene3D" id="2.30.110.10">
    <property type="entry name" value="Electron Transport, Fmn-binding Protein, Chain A"/>
    <property type="match status" value="1"/>
</dbReference>
<dbReference type="InterPro" id="IPR002563">
    <property type="entry name" value="Flavin_Rdtase-like_dom"/>
</dbReference>
<dbReference type="InterPro" id="IPR052174">
    <property type="entry name" value="Flavoredoxin"/>
</dbReference>
<dbReference type="InterPro" id="IPR012349">
    <property type="entry name" value="Split_barrel_FMN-bd"/>
</dbReference>
<dbReference type="PANTHER" id="PTHR43567:SF1">
    <property type="entry name" value="FLAVOREDOXIN"/>
    <property type="match status" value="1"/>
</dbReference>
<dbReference type="PANTHER" id="PTHR43567">
    <property type="entry name" value="FLAVOREDOXIN-RELATED-RELATED"/>
    <property type="match status" value="1"/>
</dbReference>
<dbReference type="Pfam" id="PF01613">
    <property type="entry name" value="Flavin_Reduct"/>
    <property type="match status" value="1"/>
</dbReference>
<dbReference type="SMART" id="SM00903">
    <property type="entry name" value="Flavin_Reduct"/>
    <property type="match status" value="1"/>
</dbReference>
<dbReference type="SUPFAM" id="SSF50475">
    <property type="entry name" value="FMN-binding split barrel"/>
    <property type="match status" value="1"/>
</dbReference>
<evidence type="ECO:0000250" key="1"/>
<evidence type="ECO:0000305" key="2"/>
<evidence type="ECO:0007829" key="3">
    <source>
        <dbReference type="PDB" id="2R6V"/>
    </source>
</evidence>